<protein>
    <recommendedName>
        <fullName evidence="1">Pyridoxine 5'-phosphate synthase</fullName>
        <shortName evidence="1">PNP synthase</shortName>
        <ecNumber evidence="1">2.6.99.2</ecNumber>
    </recommendedName>
</protein>
<organism>
    <name type="scientific">Xanthomonas oryzae pv. oryzae (strain MAFF 311018)</name>
    <dbReference type="NCBI Taxonomy" id="342109"/>
    <lineage>
        <taxon>Bacteria</taxon>
        <taxon>Pseudomonadati</taxon>
        <taxon>Pseudomonadota</taxon>
        <taxon>Gammaproteobacteria</taxon>
        <taxon>Lysobacterales</taxon>
        <taxon>Lysobacteraceae</taxon>
        <taxon>Xanthomonas</taxon>
    </lineage>
</organism>
<sequence>MTIQLSVNVNKIAVLRNSRGGTDPDVLQAARTCIAAGAHGITVHPRPDQRHIRAGDVLALSALTREHAVEFNIEGNPFAPPRAGYPGLLELCRATRPEQITLVPDGDGQLTSDHGFDFAQDTTQLAELIAAFKAVGSRVSLFVDAGNPDIAGAAALGADRVELYTGPYAHAHASGQTDTALALFADAGRRASAAGLGINAGHDLSQANLGDFLAAVPGVLEVSIGHALISEALYQGLEATVRAYVDILRGSQVGA</sequence>
<keyword id="KW-0963">Cytoplasm</keyword>
<keyword id="KW-0664">Pyridoxine biosynthesis</keyword>
<keyword id="KW-0808">Transferase</keyword>
<dbReference type="EC" id="2.6.99.2" evidence="1"/>
<dbReference type="EMBL" id="AP008229">
    <property type="protein sequence ID" value="BAE66767.1"/>
    <property type="molecule type" value="Genomic_DNA"/>
</dbReference>
<dbReference type="RefSeq" id="WP_011407166.1">
    <property type="nucleotide sequence ID" value="NC_007705.1"/>
</dbReference>
<dbReference type="SMR" id="Q2P9L0"/>
<dbReference type="KEGG" id="xom:XOO0012"/>
<dbReference type="HOGENOM" id="CLU_074563_1_0_6"/>
<dbReference type="UniPathway" id="UPA00244">
    <property type="reaction ID" value="UER00313"/>
</dbReference>
<dbReference type="GO" id="GO:0005829">
    <property type="term" value="C:cytosol"/>
    <property type="evidence" value="ECO:0007669"/>
    <property type="project" value="TreeGrafter"/>
</dbReference>
<dbReference type="GO" id="GO:0033856">
    <property type="term" value="F:pyridoxine 5'-phosphate synthase activity"/>
    <property type="evidence" value="ECO:0007669"/>
    <property type="project" value="UniProtKB-EC"/>
</dbReference>
<dbReference type="GO" id="GO:0008615">
    <property type="term" value="P:pyridoxine biosynthetic process"/>
    <property type="evidence" value="ECO:0007669"/>
    <property type="project" value="UniProtKB-UniRule"/>
</dbReference>
<dbReference type="CDD" id="cd00003">
    <property type="entry name" value="PNPsynthase"/>
    <property type="match status" value="1"/>
</dbReference>
<dbReference type="FunFam" id="3.20.20.70:FF:000150">
    <property type="entry name" value="Pyridoxine 5'-phosphate synthase"/>
    <property type="match status" value="1"/>
</dbReference>
<dbReference type="Gene3D" id="3.20.20.70">
    <property type="entry name" value="Aldolase class I"/>
    <property type="match status" value="1"/>
</dbReference>
<dbReference type="HAMAP" id="MF_00279">
    <property type="entry name" value="PdxJ"/>
    <property type="match status" value="1"/>
</dbReference>
<dbReference type="InterPro" id="IPR013785">
    <property type="entry name" value="Aldolase_TIM"/>
</dbReference>
<dbReference type="InterPro" id="IPR004569">
    <property type="entry name" value="PyrdxlP_synth_PdxJ"/>
</dbReference>
<dbReference type="InterPro" id="IPR036130">
    <property type="entry name" value="Pyridoxine-5'_phos_synth"/>
</dbReference>
<dbReference type="NCBIfam" id="TIGR00559">
    <property type="entry name" value="pdxJ"/>
    <property type="match status" value="1"/>
</dbReference>
<dbReference type="NCBIfam" id="NF003626">
    <property type="entry name" value="PRK05265.1-4"/>
    <property type="match status" value="1"/>
</dbReference>
<dbReference type="PANTHER" id="PTHR30456">
    <property type="entry name" value="PYRIDOXINE 5'-PHOSPHATE SYNTHASE"/>
    <property type="match status" value="1"/>
</dbReference>
<dbReference type="PANTHER" id="PTHR30456:SF0">
    <property type="entry name" value="PYRIDOXINE 5'-PHOSPHATE SYNTHASE"/>
    <property type="match status" value="1"/>
</dbReference>
<dbReference type="Pfam" id="PF03740">
    <property type="entry name" value="PdxJ"/>
    <property type="match status" value="1"/>
</dbReference>
<dbReference type="SUPFAM" id="SSF63892">
    <property type="entry name" value="Pyridoxine 5'-phosphate synthase"/>
    <property type="match status" value="1"/>
</dbReference>
<evidence type="ECO:0000255" key="1">
    <source>
        <dbReference type="HAMAP-Rule" id="MF_00279"/>
    </source>
</evidence>
<reference key="1">
    <citation type="journal article" date="2005" name="Jpn. Agric. Res. Q.">
        <title>Genome sequence of Xanthomonas oryzae pv. oryzae suggests contribution of large numbers of effector genes and insertion sequences to its race diversity.</title>
        <authorList>
            <person name="Ochiai H."/>
            <person name="Inoue Y."/>
            <person name="Takeya M."/>
            <person name="Sasaki A."/>
            <person name="Kaku H."/>
        </authorList>
    </citation>
    <scope>NUCLEOTIDE SEQUENCE [LARGE SCALE GENOMIC DNA]</scope>
    <source>
        <strain>MAFF 311018</strain>
    </source>
</reference>
<name>PDXJ_XANOM</name>
<gene>
    <name evidence="1" type="primary">pdxJ</name>
    <name type="ordered locus">XOO0012</name>
</gene>
<proteinExistence type="inferred from homology"/>
<accession>Q2P9L0</accession>
<comment type="function">
    <text evidence="1">Catalyzes the complicated ring closure reaction between the two acyclic compounds 1-deoxy-D-xylulose-5-phosphate (DXP) and 3-amino-2-oxopropyl phosphate (1-amino-acetone-3-phosphate or AAP) to form pyridoxine 5'-phosphate (PNP) and inorganic phosphate.</text>
</comment>
<comment type="catalytic activity">
    <reaction evidence="1">
        <text>3-amino-2-oxopropyl phosphate + 1-deoxy-D-xylulose 5-phosphate = pyridoxine 5'-phosphate + phosphate + 2 H2O + H(+)</text>
        <dbReference type="Rhea" id="RHEA:15265"/>
        <dbReference type="ChEBI" id="CHEBI:15377"/>
        <dbReference type="ChEBI" id="CHEBI:15378"/>
        <dbReference type="ChEBI" id="CHEBI:43474"/>
        <dbReference type="ChEBI" id="CHEBI:57279"/>
        <dbReference type="ChEBI" id="CHEBI:57792"/>
        <dbReference type="ChEBI" id="CHEBI:58589"/>
        <dbReference type="EC" id="2.6.99.2"/>
    </reaction>
</comment>
<comment type="pathway">
    <text evidence="1">Cofactor biosynthesis; pyridoxine 5'-phosphate biosynthesis; pyridoxine 5'-phosphate from D-erythrose 4-phosphate: step 5/5.</text>
</comment>
<comment type="subunit">
    <text evidence="1">Homooctamer; tetramer of dimers.</text>
</comment>
<comment type="subcellular location">
    <subcellularLocation>
        <location evidence="1">Cytoplasm</location>
    </subcellularLocation>
</comment>
<comment type="similarity">
    <text evidence="1">Belongs to the PNP synthase family.</text>
</comment>
<feature type="chain" id="PRO_0000231860" description="Pyridoxine 5'-phosphate synthase">
    <location>
        <begin position="1"/>
        <end position="255"/>
    </location>
</feature>
<feature type="active site" description="Proton acceptor" evidence="1">
    <location>
        <position position="44"/>
    </location>
</feature>
<feature type="active site" description="Proton acceptor" evidence="1">
    <location>
        <position position="74"/>
    </location>
</feature>
<feature type="active site" description="Proton donor" evidence="1">
    <location>
        <position position="202"/>
    </location>
</feature>
<feature type="binding site" evidence="1">
    <location>
        <position position="8"/>
    </location>
    <ligand>
        <name>3-amino-2-oxopropyl phosphate</name>
        <dbReference type="ChEBI" id="CHEBI:57279"/>
    </ligand>
</feature>
<feature type="binding site" evidence="1">
    <location>
        <position position="19"/>
    </location>
    <ligand>
        <name>3-amino-2-oxopropyl phosphate</name>
        <dbReference type="ChEBI" id="CHEBI:57279"/>
    </ligand>
</feature>
<feature type="binding site" evidence="1">
    <location>
        <position position="46"/>
    </location>
    <ligand>
        <name>1-deoxy-D-xylulose 5-phosphate</name>
        <dbReference type="ChEBI" id="CHEBI:57792"/>
    </ligand>
</feature>
<feature type="binding site" evidence="1">
    <location>
        <position position="51"/>
    </location>
    <ligand>
        <name>1-deoxy-D-xylulose 5-phosphate</name>
        <dbReference type="ChEBI" id="CHEBI:57792"/>
    </ligand>
</feature>
<feature type="binding site" evidence="1">
    <location>
        <position position="111"/>
    </location>
    <ligand>
        <name>1-deoxy-D-xylulose 5-phosphate</name>
        <dbReference type="ChEBI" id="CHEBI:57792"/>
    </ligand>
</feature>
<feature type="binding site" evidence="1">
    <location>
        <position position="203"/>
    </location>
    <ligand>
        <name>3-amino-2-oxopropyl phosphate</name>
        <dbReference type="ChEBI" id="CHEBI:57279"/>
    </ligand>
</feature>
<feature type="binding site" evidence="1">
    <location>
        <begin position="225"/>
        <end position="226"/>
    </location>
    <ligand>
        <name>3-amino-2-oxopropyl phosphate</name>
        <dbReference type="ChEBI" id="CHEBI:57279"/>
    </ligand>
</feature>
<feature type="site" description="Transition state stabilizer" evidence="1">
    <location>
        <position position="162"/>
    </location>
</feature>